<protein>
    <recommendedName>
        <fullName evidence="1">Ribosomal RNA small subunit methyltransferase H</fullName>
        <ecNumber evidence="1">2.1.1.199</ecNumber>
    </recommendedName>
    <alternativeName>
        <fullName evidence="1">16S rRNA m(4)C1402 methyltransferase</fullName>
    </alternativeName>
    <alternativeName>
        <fullName evidence="1">rRNA (cytosine-N(4)-)-methyltransferase RsmH</fullName>
    </alternativeName>
</protein>
<organism>
    <name type="scientific">Lacticaseibacillus casei (strain BL23)</name>
    <name type="common">Lactobacillus casei</name>
    <dbReference type="NCBI Taxonomy" id="543734"/>
    <lineage>
        <taxon>Bacteria</taxon>
        <taxon>Bacillati</taxon>
        <taxon>Bacillota</taxon>
        <taxon>Bacilli</taxon>
        <taxon>Lactobacillales</taxon>
        <taxon>Lactobacillaceae</taxon>
        <taxon>Lacticaseibacillus</taxon>
    </lineage>
</organism>
<reference key="1">
    <citation type="submission" date="2008-06" db="EMBL/GenBank/DDBJ databases">
        <title>Lactobacillus casei BL23 complete genome sequence.</title>
        <authorList>
            <person name="Maze A."/>
            <person name="Boel G."/>
            <person name="Bourand A."/>
            <person name="Loux V."/>
            <person name="Gibrat J.F."/>
            <person name="Zuniga M."/>
            <person name="Hartke A."/>
            <person name="Deutscher J."/>
        </authorList>
    </citation>
    <scope>NUCLEOTIDE SEQUENCE [LARGE SCALE GENOMIC DNA]</scope>
    <source>
        <strain>BL23</strain>
    </source>
</reference>
<keyword id="KW-0963">Cytoplasm</keyword>
<keyword id="KW-0489">Methyltransferase</keyword>
<keyword id="KW-0698">rRNA processing</keyword>
<keyword id="KW-0949">S-adenosyl-L-methionine</keyword>
<keyword id="KW-0808">Transferase</keyword>
<comment type="function">
    <text evidence="1">Specifically methylates the N4 position of cytidine in position 1402 (C1402) of 16S rRNA.</text>
</comment>
<comment type="catalytic activity">
    <reaction evidence="1">
        <text>cytidine(1402) in 16S rRNA + S-adenosyl-L-methionine = N(4)-methylcytidine(1402) in 16S rRNA + S-adenosyl-L-homocysteine + H(+)</text>
        <dbReference type="Rhea" id="RHEA:42928"/>
        <dbReference type="Rhea" id="RHEA-COMP:10286"/>
        <dbReference type="Rhea" id="RHEA-COMP:10287"/>
        <dbReference type="ChEBI" id="CHEBI:15378"/>
        <dbReference type="ChEBI" id="CHEBI:57856"/>
        <dbReference type="ChEBI" id="CHEBI:59789"/>
        <dbReference type="ChEBI" id="CHEBI:74506"/>
        <dbReference type="ChEBI" id="CHEBI:82748"/>
        <dbReference type="EC" id="2.1.1.199"/>
    </reaction>
</comment>
<comment type="subcellular location">
    <subcellularLocation>
        <location evidence="1">Cytoplasm</location>
    </subcellularLocation>
</comment>
<comment type="similarity">
    <text evidence="1">Belongs to the methyltransferase superfamily. RsmH family.</text>
</comment>
<sequence length="313" mass="34921">MTEFKHETVLLKEATAALAVKPAGIYVDATLGRGGHTRQILNQLTTGRLIAFDQDEAAIATVTADFGTLPKQLTLVHRNFRDLTDALTTLGITEVDGILYDLGVSSPQFDDSKRGFSYRFDAPLDMRMDQRQTLDAKTIVNEWPYADLVRIFSRYGEEHFSKQIARRIEQARTVQPITTTFQLVELIKAGIPAKARRTGGHPAKKVFQAIRIAVNDELSALESSLEQALKLINVGGRISVITFQSLEDRLVKTMFKEVSSVQDVPRGLPVIPASAQPNYRLVNRKPILPSEEELAVNHRAHSAKLRVIEKIHD</sequence>
<accession>B3WDX7</accession>
<evidence type="ECO:0000255" key="1">
    <source>
        <dbReference type="HAMAP-Rule" id="MF_01007"/>
    </source>
</evidence>
<proteinExistence type="inferred from homology"/>
<name>RSMH_LACCB</name>
<gene>
    <name evidence="1" type="primary">rsmH</name>
    <name type="synonym">mraW</name>
    <name type="ordered locus">LCABL_14970</name>
</gene>
<dbReference type="EC" id="2.1.1.199" evidence="1"/>
<dbReference type="EMBL" id="FM177140">
    <property type="protein sequence ID" value="CAQ66578.1"/>
    <property type="molecule type" value="Genomic_DNA"/>
</dbReference>
<dbReference type="SMR" id="B3WDX7"/>
<dbReference type="KEGG" id="lcb:LCABL_14970"/>
<dbReference type="HOGENOM" id="CLU_038422_2_0_9"/>
<dbReference type="GO" id="GO:0005737">
    <property type="term" value="C:cytoplasm"/>
    <property type="evidence" value="ECO:0007669"/>
    <property type="project" value="UniProtKB-SubCell"/>
</dbReference>
<dbReference type="GO" id="GO:0071424">
    <property type="term" value="F:rRNA (cytosine-N4-)-methyltransferase activity"/>
    <property type="evidence" value="ECO:0007669"/>
    <property type="project" value="UniProtKB-UniRule"/>
</dbReference>
<dbReference type="GO" id="GO:0070475">
    <property type="term" value="P:rRNA base methylation"/>
    <property type="evidence" value="ECO:0007669"/>
    <property type="project" value="UniProtKB-UniRule"/>
</dbReference>
<dbReference type="FunFam" id="1.10.150.170:FF:000001">
    <property type="entry name" value="Ribosomal RNA small subunit methyltransferase H"/>
    <property type="match status" value="1"/>
</dbReference>
<dbReference type="Gene3D" id="1.10.150.170">
    <property type="entry name" value="Putative methyltransferase TM0872, insert domain"/>
    <property type="match status" value="1"/>
</dbReference>
<dbReference type="Gene3D" id="3.40.50.150">
    <property type="entry name" value="Vaccinia Virus protein VP39"/>
    <property type="match status" value="1"/>
</dbReference>
<dbReference type="HAMAP" id="MF_01007">
    <property type="entry name" value="16SrRNA_methyltr_H"/>
    <property type="match status" value="1"/>
</dbReference>
<dbReference type="InterPro" id="IPR002903">
    <property type="entry name" value="RsmH"/>
</dbReference>
<dbReference type="InterPro" id="IPR023397">
    <property type="entry name" value="SAM-dep_MeTrfase_MraW_recog"/>
</dbReference>
<dbReference type="InterPro" id="IPR029063">
    <property type="entry name" value="SAM-dependent_MTases_sf"/>
</dbReference>
<dbReference type="NCBIfam" id="TIGR00006">
    <property type="entry name" value="16S rRNA (cytosine(1402)-N(4))-methyltransferase RsmH"/>
    <property type="match status" value="1"/>
</dbReference>
<dbReference type="PANTHER" id="PTHR11265:SF0">
    <property type="entry name" value="12S RRNA N4-METHYLCYTIDINE METHYLTRANSFERASE"/>
    <property type="match status" value="1"/>
</dbReference>
<dbReference type="PANTHER" id="PTHR11265">
    <property type="entry name" value="S-ADENOSYL-METHYLTRANSFERASE MRAW"/>
    <property type="match status" value="1"/>
</dbReference>
<dbReference type="Pfam" id="PF01795">
    <property type="entry name" value="Methyltransf_5"/>
    <property type="match status" value="1"/>
</dbReference>
<dbReference type="PIRSF" id="PIRSF004486">
    <property type="entry name" value="MraW"/>
    <property type="match status" value="1"/>
</dbReference>
<dbReference type="SUPFAM" id="SSF81799">
    <property type="entry name" value="Putative methyltransferase TM0872, insert domain"/>
    <property type="match status" value="1"/>
</dbReference>
<dbReference type="SUPFAM" id="SSF53335">
    <property type="entry name" value="S-adenosyl-L-methionine-dependent methyltransferases"/>
    <property type="match status" value="1"/>
</dbReference>
<feature type="chain" id="PRO_0000386941" description="Ribosomal RNA small subunit methyltransferase H">
    <location>
        <begin position="1"/>
        <end position="313"/>
    </location>
</feature>
<feature type="binding site" evidence="1">
    <location>
        <begin position="34"/>
        <end position="36"/>
    </location>
    <ligand>
        <name>S-adenosyl-L-methionine</name>
        <dbReference type="ChEBI" id="CHEBI:59789"/>
    </ligand>
</feature>
<feature type="binding site" evidence="1">
    <location>
        <position position="53"/>
    </location>
    <ligand>
        <name>S-adenosyl-L-methionine</name>
        <dbReference type="ChEBI" id="CHEBI:59789"/>
    </ligand>
</feature>
<feature type="binding site" evidence="1">
    <location>
        <position position="80"/>
    </location>
    <ligand>
        <name>S-adenosyl-L-methionine</name>
        <dbReference type="ChEBI" id="CHEBI:59789"/>
    </ligand>
</feature>
<feature type="binding site" evidence="1">
    <location>
        <position position="101"/>
    </location>
    <ligand>
        <name>S-adenosyl-L-methionine</name>
        <dbReference type="ChEBI" id="CHEBI:59789"/>
    </ligand>
</feature>
<feature type="binding site" evidence="1">
    <location>
        <position position="108"/>
    </location>
    <ligand>
        <name>S-adenosyl-L-methionine</name>
        <dbReference type="ChEBI" id="CHEBI:59789"/>
    </ligand>
</feature>